<feature type="chain" id="PRO_1000191018" description="Ketol-acid reductoisomerase (NADP(+))">
    <location>
        <begin position="1"/>
        <end position="333"/>
    </location>
</feature>
<feature type="domain" description="KARI N-terminal Rossmann" evidence="2">
    <location>
        <begin position="1"/>
        <end position="171"/>
    </location>
</feature>
<feature type="domain" description="KARI C-terminal knotted" evidence="3">
    <location>
        <begin position="172"/>
        <end position="317"/>
    </location>
</feature>
<feature type="active site" evidence="1">
    <location>
        <position position="97"/>
    </location>
</feature>
<feature type="binding site" evidence="1">
    <location>
        <begin position="14"/>
        <end position="17"/>
    </location>
    <ligand>
        <name>NADP(+)</name>
        <dbReference type="ChEBI" id="CHEBI:58349"/>
    </ligand>
</feature>
<feature type="binding site" evidence="1">
    <location>
        <position position="37"/>
    </location>
    <ligand>
        <name>NADP(+)</name>
        <dbReference type="ChEBI" id="CHEBI:58349"/>
    </ligand>
</feature>
<feature type="binding site" evidence="1">
    <location>
        <position position="42"/>
    </location>
    <ligand>
        <name>NADP(+)</name>
        <dbReference type="ChEBI" id="CHEBI:58349"/>
    </ligand>
</feature>
<feature type="binding site" evidence="1">
    <location>
        <begin position="72"/>
        <end position="75"/>
    </location>
    <ligand>
        <name>NADP(+)</name>
        <dbReference type="ChEBI" id="CHEBI:58349"/>
    </ligand>
</feature>
<feature type="binding site" evidence="1">
    <location>
        <position position="123"/>
    </location>
    <ligand>
        <name>NADP(+)</name>
        <dbReference type="ChEBI" id="CHEBI:58349"/>
    </ligand>
</feature>
<feature type="binding site" evidence="1">
    <location>
        <position position="180"/>
    </location>
    <ligand>
        <name>Mg(2+)</name>
        <dbReference type="ChEBI" id="CHEBI:18420"/>
        <label>1</label>
    </ligand>
</feature>
<feature type="binding site" evidence="1">
    <location>
        <position position="180"/>
    </location>
    <ligand>
        <name>Mg(2+)</name>
        <dbReference type="ChEBI" id="CHEBI:18420"/>
        <label>2</label>
    </ligand>
</feature>
<feature type="binding site" evidence="1">
    <location>
        <position position="184"/>
    </location>
    <ligand>
        <name>Mg(2+)</name>
        <dbReference type="ChEBI" id="CHEBI:18420"/>
        <label>1</label>
    </ligand>
</feature>
<feature type="binding site" evidence="1">
    <location>
        <position position="216"/>
    </location>
    <ligand>
        <name>Mg(2+)</name>
        <dbReference type="ChEBI" id="CHEBI:18420"/>
        <label>2</label>
    </ligand>
</feature>
<feature type="binding site" evidence="1">
    <location>
        <position position="220"/>
    </location>
    <ligand>
        <name>Mg(2+)</name>
        <dbReference type="ChEBI" id="CHEBI:18420"/>
        <label>2</label>
    </ligand>
</feature>
<feature type="binding site" evidence="1">
    <location>
        <position position="241"/>
    </location>
    <ligand>
        <name>substrate</name>
    </ligand>
</feature>
<dbReference type="EC" id="1.1.1.86" evidence="1"/>
<dbReference type="EMBL" id="AM920689">
    <property type="protein sequence ID" value="CAP50217.1"/>
    <property type="molecule type" value="Genomic_DNA"/>
</dbReference>
<dbReference type="SMR" id="B0RP32"/>
<dbReference type="KEGG" id="xca:xcc-b100_0874"/>
<dbReference type="HOGENOM" id="CLU_033821_0_1_6"/>
<dbReference type="UniPathway" id="UPA00047">
    <property type="reaction ID" value="UER00056"/>
</dbReference>
<dbReference type="UniPathway" id="UPA00049">
    <property type="reaction ID" value="UER00060"/>
</dbReference>
<dbReference type="Proteomes" id="UP000001188">
    <property type="component" value="Chromosome"/>
</dbReference>
<dbReference type="GO" id="GO:0005829">
    <property type="term" value="C:cytosol"/>
    <property type="evidence" value="ECO:0007669"/>
    <property type="project" value="TreeGrafter"/>
</dbReference>
<dbReference type="GO" id="GO:0004455">
    <property type="term" value="F:ketol-acid reductoisomerase activity"/>
    <property type="evidence" value="ECO:0007669"/>
    <property type="project" value="UniProtKB-UniRule"/>
</dbReference>
<dbReference type="GO" id="GO:0000287">
    <property type="term" value="F:magnesium ion binding"/>
    <property type="evidence" value="ECO:0007669"/>
    <property type="project" value="UniProtKB-UniRule"/>
</dbReference>
<dbReference type="GO" id="GO:0050661">
    <property type="term" value="F:NADP binding"/>
    <property type="evidence" value="ECO:0007669"/>
    <property type="project" value="InterPro"/>
</dbReference>
<dbReference type="GO" id="GO:0009097">
    <property type="term" value="P:isoleucine biosynthetic process"/>
    <property type="evidence" value="ECO:0007669"/>
    <property type="project" value="UniProtKB-UniRule"/>
</dbReference>
<dbReference type="GO" id="GO:0009099">
    <property type="term" value="P:L-valine biosynthetic process"/>
    <property type="evidence" value="ECO:0007669"/>
    <property type="project" value="UniProtKB-UniRule"/>
</dbReference>
<dbReference type="FunFam" id="3.40.50.720:FF:000023">
    <property type="entry name" value="Ketol-acid reductoisomerase (NADP(+))"/>
    <property type="match status" value="1"/>
</dbReference>
<dbReference type="Gene3D" id="6.10.240.10">
    <property type="match status" value="1"/>
</dbReference>
<dbReference type="Gene3D" id="3.40.50.720">
    <property type="entry name" value="NAD(P)-binding Rossmann-like Domain"/>
    <property type="match status" value="1"/>
</dbReference>
<dbReference type="HAMAP" id="MF_00435">
    <property type="entry name" value="IlvC"/>
    <property type="match status" value="1"/>
</dbReference>
<dbReference type="InterPro" id="IPR008927">
    <property type="entry name" value="6-PGluconate_DH-like_C_sf"/>
</dbReference>
<dbReference type="InterPro" id="IPR013023">
    <property type="entry name" value="KARI"/>
</dbReference>
<dbReference type="InterPro" id="IPR000506">
    <property type="entry name" value="KARI_C"/>
</dbReference>
<dbReference type="InterPro" id="IPR013116">
    <property type="entry name" value="KARI_N"/>
</dbReference>
<dbReference type="InterPro" id="IPR014359">
    <property type="entry name" value="KARI_prok"/>
</dbReference>
<dbReference type="InterPro" id="IPR036291">
    <property type="entry name" value="NAD(P)-bd_dom_sf"/>
</dbReference>
<dbReference type="NCBIfam" id="TIGR00465">
    <property type="entry name" value="ilvC"/>
    <property type="match status" value="1"/>
</dbReference>
<dbReference type="NCBIfam" id="NF004017">
    <property type="entry name" value="PRK05479.1"/>
    <property type="match status" value="1"/>
</dbReference>
<dbReference type="PANTHER" id="PTHR21371">
    <property type="entry name" value="KETOL-ACID REDUCTOISOMERASE, MITOCHONDRIAL"/>
    <property type="match status" value="1"/>
</dbReference>
<dbReference type="PANTHER" id="PTHR21371:SF1">
    <property type="entry name" value="KETOL-ACID REDUCTOISOMERASE, MITOCHONDRIAL"/>
    <property type="match status" value="1"/>
</dbReference>
<dbReference type="Pfam" id="PF01450">
    <property type="entry name" value="KARI_C"/>
    <property type="match status" value="1"/>
</dbReference>
<dbReference type="Pfam" id="PF07991">
    <property type="entry name" value="KARI_N"/>
    <property type="match status" value="1"/>
</dbReference>
<dbReference type="PIRSF" id="PIRSF000116">
    <property type="entry name" value="IlvC_gammaproteo"/>
    <property type="match status" value="1"/>
</dbReference>
<dbReference type="SUPFAM" id="SSF48179">
    <property type="entry name" value="6-phosphogluconate dehydrogenase C-terminal domain-like"/>
    <property type="match status" value="1"/>
</dbReference>
<dbReference type="SUPFAM" id="SSF51735">
    <property type="entry name" value="NAD(P)-binding Rossmann-fold domains"/>
    <property type="match status" value="1"/>
</dbReference>
<dbReference type="PROSITE" id="PS51851">
    <property type="entry name" value="KARI_C"/>
    <property type="match status" value="1"/>
</dbReference>
<dbReference type="PROSITE" id="PS51850">
    <property type="entry name" value="KARI_N"/>
    <property type="match status" value="1"/>
</dbReference>
<proteinExistence type="inferred from homology"/>
<organism>
    <name type="scientific">Xanthomonas campestris pv. campestris (strain B100)</name>
    <dbReference type="NCBI Taxonomy" id="509169"/>
    <lineage>
        <taxon>Bacteria</taxon>
        <taxon>Pseudomonadati</taxon>
        <taxon>Pseudomonadota</taxon>
        <taxon>Gammaproteobacteria</taxon>
        <taxon>Lysobacterales</taxon>
        <taxon>Lysobacteraceae</taxon>
        <taxon>Xanthomonas</taxon>
    </lineage>
</organism>
<gene>
    <name evidence="1" type="primary">ilvC</name>
    <name type="ordered locus">xcc-b100_0874</name>
</gene>
<keyword id="KW-0028">Amino-acid biosynthesis</keyword>
<keyword id="KW-0100">Branched-chain amino acid biosynthesis</keyword>
<keyword id="KW-0460">Magnesium</keyword>
<keyword id="KW-0479">Metal-binding</keyword>
<keyword id="KW-0521">NADP</keyword>
<keyword id="KW-0560">Oxidoreductase</keyword>
<protein>
    <recommendedName>
        <fullName evidence="1">Ketol-acid reductoisomerase (NADP(+))</fullName>
        <shortName evidence="1">KARI</shortName>
        <ecNumber evidence="1">1.1.1.86</ecNumber>
    </recommendedName>
    <alternativeName>
        <fullName evidence="1">Acetohydroxy-acid isomeroreductase</fullName>
        <shortName evidence="1">AHIR</shortName>
    </alternativeName>
    <alternativeName>
        <fullName evidence="1">Alpha-keto-beta-hydroxylacyl reductoisomerase</fullName>
    </alternativeName>
    <alternativeName>
        <fullName evidence="1">Ketol-acid reductoisomerase type 1</fullName>
    </alternativeName>
    <alternativeName>
        <fullName evidence="1">Ketol-acid reductoisomerase type I</fullName>
    </alternativeName>
</protein>
<sequence>MSNDTQPTIAIIGYGSQGRAHALNLRDSGFDVTVGLRPGGPTEAKAQADGFTVVAPAEAVKTADLVAVLTPDMVQKKLYEEVIAPNMKQGACLLFAHGLNVHFDMIKPRADLDVVLVAPKGPGALVRREYEIGRGVPCIYAVYQDTSGKAEQFALTYAGGLGGARANIIKTTFKEETETDLFGEQAVLCGGASSLVQAGFEVLVEAGYQPEIAYYEVLHELKLIVDLFYEGGITRMLEFVSETAQYGDYVSGPRVIDASTKARMKDVLTDIQNGTFTKNWVAEYEAGLPNYTKFKQADLEHPIEEVGKKLRAKMVWLNGEQQAAATPAKQQAA</sequence>
<comment type="function">
    <text evidence="1">Involved in the biosynthesis of branched-chain amino acids (BCAA). Catalyzes an alkyl-migration followed by a ketol-acid reduction of (S)-2-acetolactate (S2AL) to yield (R)-2,3-dihydroxy-isovalerate. In the isomerase reaction, S2AL is rearranged via a Mg-dependent methyl migration to produce 3-hydroxy-3-methyl-2-ketobutyrate (HMKB). In the reductase reaction, this 2-ketoacid undergoes a metal-dependent reduction by NADPH to yield (R)-2,3-dihydroxy-isovalerate.</text>
</comment>
<comment type="catalytic activity">
    <reaction evidence="1">
        <text>(2R)-2,3-dihydroxy-3-methylbutanoate + NADP(+) = (2S)-2-acetolactate + NADPH + H(+)</text>
        <dbReference type="Rhea" id="RHEA:22068"/>
        <dbReference type="ChEBI" id="CHEBI:15378"/>
        <dbReference type="ChEBI" id="CHEBI:49072"/>
        <dbReference type="ChEBI" id="CHEBI:57783"/>
        <dbReference type="ChEBI" id="CHEBI:58349"/>
        <dbReference type="ChEBI" id="CHEBI:58476"/>
        <dbReference type="EC" id="1.1.1.86"/>
    </reaction>
</comment>
<comment type="catalytic activity">
    <reaction evidence="1">
        <text>(2R,3R)-2,3-dihydroxy-3-methylpentanoate + NADP(+) = (S)-2-ethyl-2-hydroxy-3-oxobutanoate + NADPH + H(+)</text>
        <dbReference type="Rhea" id="RHEA:13493"/>
        <dbReference type="ChEBI" id="CHEBI:15378"/>
        <dbReference type="ChEBI" id="CHEBI:49256"/>
        <dbReference type="ChEBI" id="CHEBI:49258"/>
        <dbReference type="ChEBI" id="CHEBI:57783"/>
        <dbReference type="ChEBI" id="CHEBI:58349"/>
        <dbReference type="EC" id="1.1.1.86"/>
    </reaction>
</comment>
<comment type="cofactor">
    <cofactor evidence="1">
        <name>Mg(2+)</name>
        <dbReference type="ChEBI" id="CHEBI:18420"/>
    </cofactor>
    <text evidence="1">Binds 2 magnesium ions per subunit.</text>
</comment>
<comment type="pathway">
    <text evidence="1">Amino-acid biosynthesis; L-isoleucine biosynthesis; L-isoleucine from 2-oxobutanoate: step 2/4.</text>
</comment>
<comment type="pathway">
    <text evidence="1">Amino-acid biosynthesis; L-valine biosynthesis; L-valine from pyruvate: step 2/4.</text>
</comment>
<comment type="similarity">
    <text evidence="1">Belongs to the ketol-acid reductoisomerase family.</text>
</comment>
<reference key="1">
    <citation type="journal article" date="2008" name="J. Biotechnol.">
        <title>The genome of Xanthomonas campestris pv. campestris B100 and its use for the reconstruction of metabolic pathways involved in xanthan biosynthesis.</title>
        <authorList>
            <person name="Vorhoelter F.-J."/>
            <person name="Schneiker S."/>
            <person name="Goesmann A."/>
            <person name="Krause L."/>
            <person name="Bekel T."/>
            <person name="Kaiser O."/>
            <person name="Linke B."/>
            <person name="Patschkowski T."/>
            <person name="Rueckert C."/>
            <person name="Schmid J."/>
            <person name="Sidhu V.K."/>
            <person name="Sieber V."/>
            <person name="Tauch A."/>
            <person name="Watt S.A."/>
            <person name="Weisshaar B."/>
            <person name="Becker A."/>
            <person name="Niehaus K."/>
            <person name="Puehler A."/>
        </authorList>
    </citation>
    <scope>NUCLEOTIDE SEQUENCE [LARGE SCALE GENOMIC DNA]</scope>
    <source>
        <strain>B100</strain>
    </source>
</reference>
<name>ILVC_XANCB</name>
<accession>B0RP32</accession>
<evidence type="ECO:0000255" key="1">
    <source>
        <dbReference type="HAMAP-Rule" id="MF_00435"/>
    </source>
</evidence>
<evidence type="ECO:0000255" key="2">
    <source>
        <dbReference type="PROSITE-ProRule" id="PRU01197"/>
    </source>
</evidence>
<evidence type="ECO:0000255" key="3">
    <source>
        <dbReference type="PROSITE-ProRule" id="PRU01198"/>
    </source>
</evidence>